<reference key="1">
    <citation type="journal article" date="1995" name="Science">
        <title>Whole-genome random sequencing and assembly of Haemophilus influenzae Rd.</title>
        <authorList>
            <person name="Fleischmann R.D."/>
            <person name="Adams M.D."/>
            <person name="White O."/>
            <person name="Clayton R.A."/>
            <person name="Kirkness E.F."/>
            <person name="Kerlavage A.R."/>
            <person name="Bult C.J."/>
            <person name="Tomb J.-F."/>
            <person name="Dougherty B.A."/>
            <person name="Merrick J.M."/>
            <person name="McKenney K."/>
            <person name="Sutton G.G."/>
            <person name="FitzHugh W."/>
            <person name="Fields C.A."/>
            <person name="Gocayne J.D."/>
            <person name="Scott J.D."/>
            <person name="Shirley R."/>
            <person name="Liu L.-I."/>
            <person name="Glodek A."/>
            <person name="Kelley J.M."/>
            <person name="Weidman J.F."/>
            <person name="Phillips C.A."/>
            <person name="Spriggs T."/>
            <person name="Hedblom E."/>
            <person name="Cotton M.D."/>
            <person name="Utterback T.R."/>
            <person name="Hanna M.C."/>
            <person name="Nguyen D.T."/>
            <person name="Saudek D.M."/>
            <person name="Brandon R.C."/>
            <person name="Fine L.D."/>
            <person name="Fritchman J.L."/>
            <person name="Fuhrmann J.L."/>
            <person name="Geoghagen N.S.M."/>
            <person name="Gnehm C.L."/>
            <person name="McDonald L.A."/>
            <person name="Small K.V."/>
            <person name="Fraser C.M."/>
            <person name="Smith H.O."/>
            <person name="Venter J.C."/>
        </authorList>
    </citation>
    <scope>NUCLEOTIDE SEQUENCE [LARGE SCALE GENOMIC DNA]</scope>
    <source>
        <strain>ATCC 51907 / DSM 11121 / KW20 / Rd</strain>
    </source>
</reference>
<dbReference type="EC" id="3.5.4.13" evidence="1"/>
<dbReference type="EMBL" id="L42023">
    <property type="protein sequence ID" value="AAC21805.1"/>
    <property type="molecule type" value="Genomic_DNA"/>
</dbReference>
<dbReference type="PIR" id="A64050">
    <property type="entry name" value="A64050"/>
</dbReference>
<dbReference type="RefSeq" id="NP_438302.1">
    <property type="nucleotide sequence ID" value="NC_000907.1"/>
</dbReference>
<dbReference type="STRING" id="71421.HI_0133"/>
<dbReference type="EnsemblBacteria" id="AAC21805">
    <property type="protein sequence ID" value="AAC21805"/>
    <property type="gene ID" value="HI_0133"/>
</dbReference>
<dbReference type="KEGG" id="hin:HI_0133"/>
<dbReference type="PATRIC" id="fig|71421.8.peg.135"/>
<dbReference type="eggNOG" id="COG0717">
    <property type="taxonomic scope" value="Bacteria"/>
</dbReference>
<dbReference type="HOGENOM" id="CLU_087476_2_0_6"/>
<dbReference type="OrthoDB" id="9780956at2"/>
<dbReference type="PhylomeDB" id="P44534"/>
<dbReference type="BioCyc" id="HINF71421:G1GJ1-143-MONOMER"/>
<dbReference type="UniPathway" id="UPA00610">
    <property type="reaction ID" value="UER00665"/>
</dbReference>
<dbReference type="Proteomes" id="UP000000579">
    <property type="component" value="Chromosome"/>
</dbReference>
<dbReference type="GO" id="GO:0008829">
    <property type="term" value="F:dCTP deaminase activity"/>
    <property type="evidence" value="ECO:0000318"/>
    <property type="project" value="GO_Central"/>
</dbReference>
<dbReference type="GO" id="GO:0000166">
    <property type="term" value="F:nucleotide binding"/>
    <property type="evidence" value="ECO:0007669"/>
    <property type="project" value="UniProtKB-KW"/>
</dbReference>
<dbReference type="GO" id="GO:0006226">
    <property type="term" value="P:dUMP biosynthetic process"/>
    <property type="evidence" value="ECO:0007669"/>
    <property type="project" value="UniProtKB-UniPathway"/>
</dbReference>
<dbReference type="GO" id="GO:0006229">
    <property type="term" value="P:dUTP biosynthetic process"/>
    <property type="evidence" value="ECO:0007669"/>
    <property type="project" value="UniProtKB-UniRule"/>
</dbReference>
<dbReference type="GO" id="GO:0015949">
    <property type="term" value="P:nucleobase-containing small molecule interconversion"/>
    <property type="evidence" value="ECO:0000318"/>
    <property type="project" value="GO_Central"/>
</dbReference>
<dbReference type="CDD" id="cd07557">
    <property type="entry name" value="trimeric_dUTPase"/>
    <property type="match status" value="1"/>
</dbReference>
<dbReference type="FunFam" id="2.70.40.10:FF:000003">
    <property type="entry name" value="dCTP deaminase"/>
    <property type="match status" value="1"/>
</dbReference>
<dbReference type="Gene3D" id="2.70.40.10">
    <property type="match status" value="1"/>
</dbReference>
<dbReference type="HAMAP" id="MF_00146">
    <property type="entry name" value="dCTP_deaminase"/>
    <property type="match status" value="1"/>
</dbReference>
<dbReference type="InterPro" id="IPR011962">
    <property type="entry name" value="dCTP_deaminase"/>
</dbReference>
<dbReference type="InterPro" id="IPR036157">
    <property type="entry name" value="dUTPase-like_sf"/>
</dbReference>
<dbReference type="InterPro" id="IPR033704">
    <property type="entry name" value="dUTPase_trimeric"/>
</dbReference>
<dbReference type="NCBIfam" id="TIGR02274">
    <property type="entry name" value="dCTP_deam"/>
    <property type="match status" value="1"/>
</dbReference>
<dbReference type="PANTHER" id="PTHR42680">
    <property type="entry name" value="DCTP DEAMINASE"/>
    <property type="match status" value="1"/>
</dbReference>
<dbReference type="PANTHER" id="PTHR42680:SF3">
    <property type="entry name" value="DCTP DEAMINASE"/>
    <property type="match status" value="1"/>
</dbReference>
<dbReference type="Pfam" id="PF22769">
    <property type="entry name" value="DCD"/>
    <property type="match status" value="1"/>
</dbReference>
<dbReference type="SUPFAM" id="SSF51283">
    <property type="entry name" value="dUTPase-like"/>
    <property type="match status" value="1"/>
</dbReference>
<proteinExistence type="inferred from homology"/>
<keyword id="KW-0378">Hydrolase</keyword>
<keyword id="KW-0546">Nucleotide metabolism</keyword>
<keyword id="KW-0547">Nucleotide-binding</keyword>
<keyword id="KW-1185">Reference proteome</keyword>
<organism>
    <name type="scientific">Haemophilus influenzae (strain ATCC 51907 / DSM 11121 / KW20 / Rd)</name>
    <dbReference type="NCBI Taxonomy" id="71421"/>
    <lineage>
        <taxon>Bacteria</taxon>
        <taxon>Pseudomonadati</taxon>
        <taxon>Pseudomonadota</taxon>
        <taxon>Gammaproteobacteria</taxon>
        <taxon>Pasteurellales</taxon>
        <taxon>Pasteurellaceae</taxon>
        <taxon>Haemophilus</taxon>
    </lineage>
</organism>
<feature type="chain" id="PRO_0000155988" description="dCTP deaminase">
    <location>
        <begin position="1"/>
        <end position="195"/>
    </location>
</feature>
<feature type="region of interest" description="Disordered" evidence="2">
    <location>
        <begin position="171"/>
        <end position="195"/>
    </location>
</feature>
<feature type="active site" description="Proton donor/acceptor" evidence="1">
    <location>
        <position position="138"/>
    </location>
</feature>
<feature type="binding site" evidence="1">
    <location>
        <begin position="110"/>
        <end position="115"/>
    </location>
    <ligand>
        <name>dCTP</name>
        <dbReference type="ChEBI" id="CHEBI:61481"/>
    </ligand>
</feature>
<feature type="binding site" evidence="1">
    <location>
        <position position="128"/>
    </location>
    <ligand>
        <name>dCTP</name>
        <dbReference type="ChEBI" id="CHEBI:61481"/>
    </ligand>
</feature>
<feature type="binding site" evidence="1">
    <location>
        <begin position="136"/>
        <end position="138"/>
    </location>
    <ligand>
        <name>dCTP</name>
        <dbReference type="ChEBI" id="CHEBI:61481"/>
    </ligand>
</feature>
<feature type="binding site" evidence="1">
    <location>
        <position position="171"/>
    </location>
    <ligand>
        <name>dCTP</name>
        <dbReference type="ChEBI" id="CHEBI:61481"/>
    </ligand>
</feature>
<feature type="binding site" evidence="1">
    <location>
        <position position="178"/>
    </location>
    <ligand>
        <name>dCTP</name>
        <dbReference type="ChEBI" id="CHEBI:61481"/>
    </ligand>
</feature>
<feature type="binding site" evidence="1">
    <location>
        <position position="182"/>
    </location>
    <ligand>
        <name>dCTP</name>
        <dbReference type="ChEBI" id="CHEBI:61481"/>
    </ligand>
</feature>
<evidence type="ECO:0000255" key="1">
    <source>
        <dbReference type="HAMAP-Rule" id="MF_00146"/>
    </source>
</evidence>
<evidence type="ECO:0000256" key="2">
    <source>
        <dbReference type="SAM" id="MobiDB-lite"/>
    </source>
</evidence>
<protein>
    <recommendedName>
        <fullName evidence="1">dCTP deaminase</fullName>
        <ecNumber evidence="1">3.5.4.13</ecNumber>
    </recommendedName>
    <alternativeName>
        <fullName evidence="1">Deoxycytidine triphosphate deaminase</fullName>
    </alternativeName>
</protein>
<accession>P44534</accession>
<comment type="function">
    <text evidence="1">Catalyzes the deamination of dCTP to dUTP.</text>
</comment>
<comment type="catalytic activity">
    <reaction evidence="1">
        <text>dCTP + H2O + H(+) = dUTP + NH4(+)</text>
        <dbReference type="Rhea" id="RHEA:22680"/>
        <dbReference type="ChEBI" id="CHEBI:15377"/>
        <dbReference type="ChEBI" id="CHEBI:15378"/>
        <dbReference type="ChEBI" id="CHEBI:28938"/>
        <dbReference type="ChEBI" id="CHEBI:61481"/>
        <dbReference type="ChEBI" id="CHEBI:61555"/>
        <dbReference type="EC" id="3.5.4.13"/>
    </reaction>
</comment>
<comment type="pathway">
    <text evidence="1">Pyrimidine metabolism; dUMP biosynthesis; dUMP from dCTP (dUTP route): step 1/2.</text>
</comment>
<comment type="subunit">
    <text evidence="1">Homotrimer.</text>
</comment>
<comment type="similarity">
    <text evidence="1">Belongs to the dCTP deaminase family.</text>
</comment>
<sequence length="195" mass="21618">MRLCDTDIERYLDDGIISLTPRPNNDKINGATIDVRLGNSFRVFREHSAPFIDLSGPKEEVSAQLESVMSDEIIIPEGEAFFLHPGTLALATTLESVKLPANIIGWLDGRSSLARLGLMVHVTAHRIDPGWEGKIVLEFYNSGKLPLALRPNMVIGALSFEVLSGEXKRPYSSRKDAKYKNQQSAVASRIDEDKE</sequence>
<name>DCD_HAEIN</name>
<gene>
    <name evidence="1" type="primary">dcd</name>
    <name type="ordered locus">HI_0133</name>
</gene>